<organism>
    <name type="scientific">Methanococcus maripaludis (strain C7 / ATCC BAA-1331)</name>
    <dbReference type="NCBI Taxonomy" id="426368"/>
    <lineage>
        <taxon>Archaea</taxon>
        <taxon>Methanobacteriati</taxon>
        <taxon>Methanobacteriota</taxon>
        <taxon>Methanomada group</taxon>
        <taxon>Methanococci</taxon>
        <taxon>Methanococcales</taxon>
        <taxon>Methanococcaceae</taxon>
        <taxon>Methanococcus</taxon>
    </lineage>
</organism>
<reference key="1">
    <citation type="submission" date="2007-06" db="EMBL/GenBank/DDBJ databases">
        <title>Complete sequence of Methanococcus maripaludis C7.</title>
        <authorList>
            <consortium name="US DOE Joint Genome Institute"/>
            <person name="Copeland A."/>
            <person name="Lucas S."/>
            <person name="Lapidus A."/>
            <person name="Barry K."/>
            <person name="Glavina del Rio T."/>
            <person name="Dalin E."/>
            <person name="Tice H."/>
            <person name="Pitluck S."/>
            <person name="Clum A."/>
            <person name="Schmutz J."/>
            <person name="Larimer F."/>
            <person name="Land M."/>
            <person name="Hauser L."/>
            <person name="Kyrpides N."/>
            <person name="Anderson I."/>
            <person name="Sieprawska-Lupa M."/>
            <person name="Whitman W.B."/>
            <person name="Richardson P."/>
        </authorList>
    </citation>
    <scope>NUCLEOTIDE SEQUENCE [LARGE SCALE GENOMIC DNA]</scope>
    <source>
        <strain>C7 / ATCC BAA-1331</strain>
    </source>
</reference>
<protein>
    <recommendedName>
        <fullName evidence="1">Digeranylgeranylglycerophospholipid reductase</fullName>
        <shortName evidence="1">DGGGPL reductase</shortName>
        <ecNumber evidence="1">1.3.-.-</ecNumber>
    </recommendedName>
    <alternativeName>
        <fullName evidence="1">2,3-bis-O-geranylgeranylglyceryl phosphate reductase</fullName>
    </alternativeName>
    <alternativeName>
        <fullName evidence="1">Geranylgeranyl reductase</fullName>
        <shortName evidence="1">GGR</shortName>
    </alternativeName>
</protein>
<sequence>MRALNDSYDVVVVGAGPAGSMASYNASKNGAKTLLIEKSQEIGTPVRCAEAVPRIEEFGINPDPSFIKSYIKGGYLIAPNGKKVVVKGGKTDGYVVERKVFDKYLAIRSGQAGTQIAVKSRVTGIEKTDDGYNVFVNYLGDEYVVKSKIVIAADGVESNIAEYAGLKSKKNPKEICSCAEYEMTNVQLLDNEMMEFYFGDICPKGYIWLFPKGDTVNVGIGVIDSKKRAIDYLDEFLSNPLVEGRLDNAVPVEFKVGGDPVGGPIEKTVDDNIIVVGDAAGHVSPLTGGGIGLSMDCGLMAGEVAAQSIKAENYSEEFLSLYEKRWKEKYYKPLMKDLKYKNILQKLSDDELNAIADSIPENLEEVDVGKLAVKIVAKAPSLLRYFKELL</sequence>
<keyword id="KW-0274">FAD</keyword>
<keyword id="KW-0285">Flavoprotein</keyword>
<keyword id="KW-0444">Lipid biosynthesis</keyword>
<keyword id="KW-0443">Lipid metabolism</keyword>
<keyword id="KW-0560">Oxidoreductase</keyword>
<keyword id="KW-0594">Phospholipid biosynthesis</keyword>
<keyword id="KW-1208">Phospholipid metabolism</keyword>
<comment type="function">
    <text evidence="1">Is involved in the reduction of 2,3-digeranylgeranylglycerophospholipids (unsaturated archaeols) into 2,3-diphytanylglycerophospholipids (saturated archaeols) in the biosynthesis of archaeal membrane lipids. Catalyzes the formation of archaetidic acid (2,3-di-O-phytanyl-sn-glyceryl phosphate) from 2,3-di-O-geranylgeranylglyceryl phosphate (DGGGP) via the hydrogenation of each double bond of the isoprenoid chains. Is also probably able to reduce double bonds of geranyl groups in CDP-2,3-bis-O-(geranylgeranyl)-sn-glycerol and archaetidylserine, thus acting at various stages in the biosynthesis of archaeal membrane lipids.</text>
</comment>
<comment type="catalytic activity">
    <reaction evidence="1">
        <text>a 2,3-bis-O-phytanyl-sn-glycerol 1-phospholipid + 8 A = a 2,3-bis-O-(geranylgeranyl)-sn-glycerol 1-phospholipid + 8 AH2</text>
        <dbReference type="Rhea" id="RHEA:64376"/>
        <dbReference type="ChEBI" id="CHEBI:13193"/>
        <dbReference type="ChEBI" id="CHEBI:17499"/>
        <dbReference type="ChEBI" id="CHEBI:138139"/>
        <dbReference type="ChEBI" id="CHEBI:138140"/>
    </reaction>
    <physiologicalReaction direction="right-to-left" evidence="1">
        <dbReference type="Rhea" id="RHEA:64378"/>
    </physiologicalReaction>
</comment>
<comment type="catalytic activity">
    <reaction evidence="1">
        <text>2,3-bis-O-(phytanyl)-sn-glycerol 1-phosphate + 8 A = 2,3-bis-O-(geranylgeranyl)-sn-glycerol 1-phosphate + 8 AH2</text>
        <dbReference type="Rhea" id="RHEA:64368"/>
        <dbReference type="ChEBI" id="CHEBI:13193"/>
        <dbReference type="ChEBI" id="CHEBI:17499"/>
        <dbReference type="ChEBI" id="CHEBI:58837"/>
        <dbReference type="ChEBI" id="CHEBI:73125"/>
    </reaction>
    <physiologicalReaction direction="right-to-left" evidence="1">
        <dbReference type="Rhea" id="RHEA:64370"/>
    </physiologicalReaction>
</comment>
<comment type="catalytic activity">
    <reaction evidence="1">
        <text>CDP-2,3-bis-O-(geranylgeranyl)-sn-glycerol + 8 AH2 = CDP-2,3-bis-O-(phytanyl)-sn-glycerol + 8 A</text>
        <dbReference type="Rhea" id="RHEA:84207"/>
        <dbReference type="ChEBI" id="CHEBI:13193"/>
        <dbReference type="ChEBI" id="CHEBI:17499"/>
        <dbReference type="ChEBI" id="CHEBI:58838"/>
        <dbReference type="ChEBI" id="CHEBI:74004"/>
    </reaction>
    <physiologicalReaction direction="left-to-right" evidence="1">
        <dbReference type="Rhea" id="RHEA:84208"/>
    </physiologicalReaction>
</comment>
<comment type="catalytic activity">
    <reaction evidence="1">
        <text>archaetidylserine + 8 AH2 = 2,3-bis-O-phytanyl-sn-glycero-3-phospho-L-serine + 8 A</text>
        <dbReference type="Rhea" id="RHEA:84215"/>
        <dbReference type="ChEBI" id="CHEBI:13193"/>
        <dbReference type="ChEBI" id="CHEBI:17499"/>
        <dbReference type="ChEBI" id="CHEBI:71517"/>
        <dbReference type="ChEBI" id="CHEBI:74853"/>
    </reaction>
    <physiologicalReaction direction="left-to-right" evidence="1">
        <dbReference type="Rhea" id="RHEA:84216"/>
    </physiologicalReaction>
</comment>
<comment type="cofactor">
    <cofactor evidence="1">
        <name>FAD</name>
        <dbReference type="ChEBI" id="CHEBI:57692"/>
    </cofactor>
    <text evidence="1">Binds 1 FAD per subunit.</text>
</comment>
<comment type="pathway">
    <text evidence="1">Membrane lipid metabolism; glycerophospholipid metabolism.</text>
</comment>
<comment type="miscellaneous">
    <text evidence="1">Reduction reaction proceeds via syn addition of hydrogen for double bonds.</text>
</comment>
<comment type="similarity">
    <text evidence="1">Belongs to the geranylgeranyl reductase family. DGGGPL reductase subfamily.</text>
</comment>
<gene>
    <name type="ordered locus">MmarC7_1386</name>
</gene>
<name>GGR_METM7</name>
<accession>A6VJ23</accession>
<dbReference type="EC" id="1.3.-.-" evidence="1"/>
<dbReference type="EMBL" id="CP000745">
    <property type="protein sequence ID" value="ABR66449.1"/>
    <property type="molecule type" value="Genomic_DNA"/>
</dbReference>
<dbReference type="SMR" id="A6VJ23"/>
<dbReference type="STRING" id="426368.MmarC7_1386"/>
<dbReference type="KEGG" id="mmz:MmarC7_1386"/>
<dbReference type="eggNOG" id="arCOG00570">
    <property type="taxonomic scope" value="Archaea"/>
</dbReference>
<dbReference type="HOGENOM" id="CLU_024648_0_0_2"/>
<dbReference type="OrthoDB" id="6062at2157"/>
<dbReference type="UniPathway" id="UPA00940"/>
<dbReference type="GO" id="GO:0016020">
    <property type="term" value="C:membrane"/>
    <property type="evidence" value="ECO:0007669"/>
    <property type="project" value="GOC"/>
</dbReference>
<dbReference type="GO" id="GO:0050660">
    <property type="term" value="F:flavin adenine dinucleotide binding"/>
    <property type="evidence" value="ECO:0007669"/>
    <property type="project" value="UniProtKB-UniRule"/>
</dbReference>
<dbReference type="GO" id="GO:0045550">
    <property type="term" value="F:geranylgeranyl reductase activity"/>
    <property type="evidence" value="ECO:0007669"/>
    <property type="project" value="InterPro"/>
</dbReference>
<dbReference type="GO" id="GO:0016628">
    <property type="term" value="F:oxidoreductase activity, acting on the CH-CH group of donors, NAD or NADP as acceptor"/>
    <property type="evidence" value="ECO:0007669"/>
    <property type="project" value="InterPro"/>
</dbReference>
<dbReference type="GO" id="GO:0046474">
    <property type="term" value="P:glycerophospholipid biosynthetic process"/>
    <property type="evidence" value="ECO:0007669"/>
    <property type="project" value="UniProtKB-UniRule"/>
</dbReference>
<dbReference type="GO" id="GO:0046467">
    <property type="term" value="P:membrane lipid biosynthetic process"/>
    <property type="evidence" value="ECO:0007669"/>
    <property type="project" value="InterPro"/>
</dbReference>
<dbReference type="Gene3D" id="3.30.9.10">
    <property type="entry name" value="D-Amino Acid Oxidase, subunit A, domain 2"/>
    <property type="match status" value="1"/>
</dbReference>
<dbReference type="Gene3D" id="3.50.50.60">
    <property type="entry name" value="FAD/NAD(P)-binding domain"/>
    <property type="match status" value="1"/>
</dbReference>
<dbReference type="HAMAP" id="MF_01287">
    <property type="entry name" value="DGGGPL_reductase"/>
    <property type="match status" value="1"/>
</dbReference>
<dbReference type="InterPro" id="IPR023590">
    <property type="entry name" value="DGGGPL_reductase"/>
</dbReference>
<dbReference type="InterPro" id="IPR036188">
    <property type="entry name" value="FAD/NAD-bd_sf"/>
</dbReference>
<dbReference type="InterPro" id="IPR011777">
    <property type="entry name" value="Geranylgeranyl_Rdtase_fam"/>
</dbReference>
<dbReference type="InterPro" id="IPR050407">
    <property type="entry name" value="Geranylgeranyl_reductase"/>
</dbReference>
<dbReference type="InterPro" id="IPR054715">
    <property type="entry name" value="GGR_cat"/>
</dbReference>
<dbReference type="NCBIfam" id="TIGR02032">
    <property type="entry name" value="GG-red-SF"/>
    <property type="match status" value="1"/>
</dbReference>
<dbReference type="PANTHER" id="PTHR42685:SF18">
    <property type="entry name" value="DIGERANYLGERANYLGLYCEROPHOSPHOLIPID REDUCTASE"/>
    <property type="match status" value="1"/>
</dbReference>
<dbReference type="PANTHER" id="PTHR42685">
    <property type="entry name" value="GERANYLGERANYL DIPHOSPHATE REDUCTASE"/>
    <property type="match status" value="1"/>
</dbReference>
<dbReference type="Pfam" id="PF12831">
    <property type="entry name" value="FAD_oxidored"/>
    <property type="match status" value="1"/>
</dbReference>
<dbReference type="Pfam" id="PF22578">
    <property type="entry name" value="GGR_cat"/>
    <property type="match status" value="1"/>
</dbReference>
<dbReference type="PRINTS" id="PR00420">
    <property type="entry name" value="RNGMNOXGNASE"/>
</dbReference>
<dbReference type="SUPFAM" id="SSF51905">
    <property type="entry name" value="FAD/NAD(P)-binding domain"/>
    <property type="match status" value="1"/>
</dbReference>
<feature type="chain" id="PRO_0000351463" description="Digeranylgeranylglycerophospholipid reductase">
    <location>
        <begin position="1"/>
        <end position="390"/>
    </location>
</feature>
<feature type="binding site" evidence="1">
    <location>
        <position position="18"/>
    </location>
    <ligand>
        <name>FAD</name>
        <dbReference type="ChEBI" id="CHEBI:57692"/>
    </ligand>
</feature>
<feature type="binding site" evidence="1">
    <location>
        <position position="37"/>
    </location>
    <ligand>
        <name>FAD</name>
        <dbReference type="ChEBI" id="CHEBI:57692"/>
    </ligand>
</feature>
<feature type="binding site" evidence="1">
    <location>
        <position position="48"/>
    </location>
    <ligand>
        <name>FAD</name>
        <dbReference type="ChEBI" id="CHEBI:57692"/>
    </ligand>
</feature>
<feature type="binding site" evidence="1">
    <location>
        <position position="49"/>
    </location>
    <ligand>
        <name>FAD</name>
        <dbReference type="ChEBI" id="CHEBI:57692"/>
    </ligand>
</feature>
<feature type="binding site" evidence="1">
    <location>
        <position position="51"/>
    </location>
    <ligand>
        <name>FAD</name>
        <dbReference type="ChEBI" id="CHEBI:57692"/>
    </ligand>
</feature>
<feature type="binding site" evidence="1">
    <location>
        <position position="98"/>
    </location>
    <ligand>
        <name>FAD</name>
        <dbReference type="ChEBI" id="CHEBI:57692"/>
    </ligand>
</feature>
<feature type="binding site" evidence="1">
    <location>
        <position position="122"/>
    </location>
    <ligand>
        <name>FAD</name>
        <dbReference type="ChEBI" id="CHEBI:57692"/>
    </ligand>
</feature>
<feature type="binding site" evidence="1">
    <location>
        <position position="278"/>
    </location>
    <ligand>
        <name>FAD</name>
        <dbReference type="ChEBI" id="CHEBI:57692"/>
    </ligand>
</feature>
<feature type="binding site" evidence="1">
    <location>
        <position position="290"/>
    </location>
    <ligand>
        <name>FAD</name>
        <dbReference type="ChEBI" id="CHEBI:57692"/>
    </ligand>
</feature>
<feature type="binding site" evidence="1">
    <location>
        <position position="291"/>
    </location>
    <ligand>
        <name>FAD</name>
        <dbReference type="ChEBI" id="CHEBI:57692"/>
    </ligand>
</feature>
<feature type="binding site" evidence="1">
    <location>
        <position position="368"/>
    </location>
    <ligand>
        <name>a 2,3-bis-O-(geranylgeranyl)-sn-glycerol 1-phospholipid</name>
        <dbReference type="ChEBI" id="CHEBI:138140"/>
    </ligand>
</feature>
<evidence type="ECO:0000255" key="1">
    <source>
        <dbReference type="HAMAP-Rule" id="MF_01287"/>
    </source>
</evidence>
<proteinExistence type="inferred from homology"/>